<dbReference type="EC" id="6.1.1.16" evidence="1"/>
<dbReference type="EMBL" id="AP006878">
    <property type="protein sequence ID" value="BAD84633.1"/>
    <property type="molecule type" value="Genomic_DNA"/>
</dbReference>
<dbReference type="RefSeq" id="WP_011249399.1">
    <property type="nucleotide sequence ID" value="NC_006624.1"/>
</dbReference>
<dbReference type="SMR" id="Q5JD45"/>
<dbReference type="IntAct" id="Q5JD45">
    <property type="interactions" value="1"/>
</dbReference>
<dbReference type="MINT" id="Q5JD45"/>
<dbReference type="STRING" id="69014.TK0444"/>
<dbReference type="EnsemblBacteria" id="BAD84633">
    <property type="protein sequence ID" value="BAD84633"/>
    <property type="gene ID" value="TK0444"/>
</dbReference>
<dbReference type="GeneID" id="78446955"/>
<dbReference type="KEGG" id="tko:TK0444"/>
<dbReference type="PATRIC" id="fig|69014.16.peg.437"/>
<dbReference type="eggNOG" id="arCOG00486">
    <property type="taxonomic scope" value="Archaea"/>
</dbReference>
<dbReference type="HOGENOM" id="CLU_013528_0_1_2"/>
<dbReference type="InParanoid" id="Q5JD45"/>
<dbReference type="OrthoDB" id="9445at2157"/>
<dbReference type="PhylomeDB" id="Q5JD45"/>
<dbReference type="Proteomes" id="UP000000536">
    <property type="component" value="Chromosome"/>
</dbReference>
<dbReference type="GO" id="GO:0005737">
    <property type="term" value="C:cytoplasm"/>
    <property type="evidence" value="ECO:0000318"/>
    <property type="project" value="GO_Central"/>
</dbReference>
<dbReference type="GO" id="GO:0005524">
    <property type="term" value="F:ATP binding"/>
    <property type="evidence" value="ECO:0000318"/>
    <property type="project" value="GO_Central"/>
</dbReference>
<dbReference type="GO" id="GO:0004817">
    <property type="term" value="F:cysteine-tRNA ligase activity"/>
    <property type="evidence" value="ECO:0000318"/>
    <property type="project" value="GO_Central"/>
</dbReference>
<dbReference type="GO" id="GO:0008270">
    <property type="term" value="F:zinc ion binding"/>
    <property type="evidence" value="ECO:0007669"/>
    <property type="project" value="UniProtKB-UniRule"/>
</dbReference>
<dbReference type="GO" id="GO:0006423">
    <property type="term" value="P:cysteinyl-tRNA aminoacylation"/>
    <property type="evidence" value="ECO:0000318"/>
    <property type="project" value="GO_Central"/>
</dbReference>
<dbReference type="CDD" id="cd00672">
    <property type="entry name" value="CysRS_core"/>
    <property type="match status" value="1"/>
</dbReference>
<dbReference type="FunFam" id="3.40.50.620:FF:000009">
    <property type="entry name" value="Cysteine--tRNA ligase"/>
    <property type="match status" value="1"/>
</dbReference>
<dbReference type="Gene3D" id="1.20.120.1910">
    <property type="entry name" value="Cysteine-tRNA ligase, C-terminal anti-codon recognition domain"/>
    <property type="match status" value="1"/>
</dbReference>
<dbReference type="Gene3D" id="3.40.50.620">
    <property type="entry name" value="HUPs"/>
    <property type="match status" value="1"/>
</dbReference>
<dbReference type="HAMAP" id="MF_00041">
    <property type="entry name" value="Cys_tRNA_synth"/>
    <property type="match status" value="1"/>
</dbReference>
<dbReference type="InterPro" id="IPR015803">
    <property type="entry name" value="Cys-tRNA-ligase"/>
</dbReference>
<dbReference type="InterPro" id="IPR015273">
    <property type="entry name" value="Cys-tRNA-synt_Ia_DALR"/>
</dbReference>
<dbReference type="InterPro" id="IPR024909">
    <property type="entry name" value="Cys-tRNA/MSH_ligase"/>
</dbReference>
<dbReference type="InterPro" id="IPR014729">
    <property type="entry name" value="Rossmann-like_a/b/a_fold"/>
</dbReference>
<dbReference type="InterPro" id="IPR032678">
    <property type="entry name" value="tRNA-synt_1_cat_dom"/>
</dbReference>
<dbReference type="InterPro" id="IPR009080">
    <property type="entry name" value="tRNAsynth_Ia_anticodon-bd"/>
</dbReference>
<dbReference type="NCBIfam" id="TIGR00435">
    <property type="entry name" value="cysS"/>
    <property type="match status" value="1"/>
</dbReference>
<dbReference type="PANTHER" id="PTHR10890:SF3">
    <property type="entry name" value="CYSTEINE--TRNA LIGASE, CYTOPLASMIC"/>
    <property type="match status" value="1"/>
</dbReference>
<dbReference type="PANTHER" id="PTHR10890">
    <property type="entry name" value="CYSTEINYL-TRNA SYNTHETASE"/>
    <property type="match status" value="1"/>
</dbReference>
<dbReference type="Pfam" id="PF09190">
    <property type="entry name" value="DALR_2"/>
    <property type="match status" value="1"/>
</dbReference>
<dbReference type="Pfam" id="PF01406">
    <property type="entry name" value="tRNA-synt_1e"/>
    <property type="match status" value="1"/>
</dbReference>
<dbReference type="PRINTS" id="PR00983">
    <property type="entry name" value="TRNASYNTHCYS"/>
</dbReference>
<dbReference type="SMART" id="SM00840">
    <property type="entry name" value="DALR_2"/>
    <property type="match status" value="1"/>
</dbReference>
<dbReference type="SUPFAM" id="SSF47323">
    <property type="entry name" value="Anticodon-binding domain of a subclass of class I aminoacyl-tRNA synthetases"/>
    <property type="match status" value="1"/>
</dbReference>
<dbReference type="SUPFAM" id="SSF52374">
    <property type="entry name" value="Nucleotidylyl transferase"/>
    <property type="match status" value="1"/>
</dbReference>
<name>SYC_THEKO</name>
<reference key="1">
    <citation type="journal article" date="2005" name="Genome Res.">
        <title>Complete genome sequence of the hyperthermophilic archaeon Thermococcus kodakaraensis KOD1 and comparison with Pyrococcus genomes.</title>
        <authorList>
            <person name="Fukui T."/>
            <person name="Atomi H."/>
            <person name="Kanai T."/>
            <person name="Matsumi R."/>
            <person name="Fujiwara S."/>
            <person name="Imanaka T."/>
        </authorList>
    </citation>
    <scope>NUCLEOTIDE SEQUENCE [LARGE SCALE GENOMIC DNA]</scope>
    <source>
        <strain>ATCC BAA-918 / JCM 12380 / KOD1</strain>
    </source>
</reference>
<keyword id="KW-0030">Aminoacyl-tRNA synthetase</keyword>
<keyword id="KW-0067">ATP-binding</keyword>
<keyword id="KW-0963">Cytoplasm</keyword>
<keyword id="KW-0436">Ligase</keyword>
<keyword id="KW-0479">Metal-binding</keyword>
<keyword id="KW-0547">Nucleotide-binding</keyword>
<keyword id="KW-0648">Protein biosynthesis</keyword>
<keyword id="KW-1185">Reference proteome</keyword>
<keyword id="KW-0862">Zinc</keyword>
<gene>
    <name evidence="1" type="primary">cysS</name>
    <name type="ordered locus">TK0444</name>
</gene>
<protein>
    <recommendedName>
        <fullName evidence="1">Cysteine--tRNA ligase</fullName>
        <ecNumber evidence="1">6.1.1.16</ecNumber>
    </recommendedName>
    <alternativeName>
        <fullName evidence="1">Cysteinyl-tRNA synthetase</fullName>
        <shortName evidence="1">CysRS</shortName>
    </alternativeName>
</protein>
<proteinExistence type="inferred from homology"/>
<organism>
    <name type="scientific">Thermococcus kodakarensis (strain ATCC BAA-918 / JCM 12380 / KOD1)</name>
    <name type="common">Pyrococcus kodakaraensis (strain KOD1)</name>
    <dbReference type="NCBI Taxonomy" id="69014"/>
    <lineage>
        <taxon>Archaea</taxon>
        <taxon>Methanobacteriati</taxon>
        <taxon>Methanobacteriota</taxon>
        <taxon>Thermococci</taxon>
        <taxon>Thermococcales</taxon>
        <taxon>Thermococcaceae</taxon>
        <taxon>Thermococcus</taxon>
    </lineage>
</organism>
<feature type="chain" id="PRO_0000159544" description="Cysteine--tRNA ligase">
    <location>
        <begin position="1"/>
        <end position="476"/>
    </location>
</feature>
<feature type="short sequence motif" description="'HIGH' region">
    <location>
        <begin position="31"/>
        <end position="41"/>
    </location>
</feature>
<feature type="short sequence motif" description="'KMSKS' region">
    <location>
        <begin position="266"/>
        <end position="270"/>
    </location>
</feature>
<feature type="binding site" evidence="1">
    <location>
        <position position="29"/>
    </location>
    <ligand>
        <name>Zn(2+)</name>
        <dbReference type="ChEBI" id="CHEBI:29105"/>
    </ligand>
</feature>
<feature type="binding site" evidence="1">
    <location>
        <position position="209"/>
    </location>
    <ligand>
        <name>Zn(2+)</name>
        <dbReference type="ChEBI" id="CHEBI:29105"/>
    </ligand>
</feature>
<feature type="binding site" evidence="1">
    <location>
        <position position="234"/>
    </location>
    <ligand>
        <name>Zn(2+)</name>
        <dbReference type="ChEBI" id="CHEBI:29105"/>
    </ligand>
</feature>
<feature type="binding site" evidence="1">
    <location>
        <position position="238"/>
    </location>
    <ligand>
        <name>Zn(2+)</name>
        <dbReference type="ChEBI" id="CHEBI:29105"/>
    </ligand>
</feature>
<feature type="binding site" evidence="1">
    <location>
        <position position="269"/>
    </location>
    <ligand>
        <name>ATP</name>
        <dbReference type="ChEBI" id="CHEBI:30616"/>
    </ligand>
</feature>
<sequence length="476" mass="55969">MGIKIYNTLTRQKEEFKPLREGEVRMYVCGPTVYDYTHIGHARTYIAFDVIRRYLEHKGYTVLMVMNFTDIDDKIIKRANETGEDPKELAEKFLKYFLEDMKALKVKPADIYPRVTEHIQDIIDFIRKLQEKGYAYEGSDGVYFEVRKFKDYGKLSKVKLEDLVKGARVEPGEGKKNPEDFALWKKAKPGEPKWESPWGEGRPGWHIECSTMSTKYLGESFDIHGGGSDLIFPHHENEIAQTEACTGHEWVRYWMHTGFLMVNGEKMSKSLGNFVTIREALERYDPEVIRLFVLQRHYRSPLDYTEEGLEHAKNNLERLYNTLENIRVAMERAEISFKWGEEEFEAYEAIRDGRKKFYDAMDDDFNTAEALKAVFEVSNAINRYLTQVEKPKESILRKAWEFFKMVSEVFGIFEDYFREQKAGEEEALIKLLIDVRAQLRKERKFDLADKIRDELRNLGIQLEDTPQGTVWKRIKV</sequence>
<comment type="catalytic activity">
    <reaction evidence="1">
        <text>tRNA(Cys) + L-cysteine + ATP = L-cysteinyl-tRNA(Cys) + AMP + diphosphate</text>
        <dbReference type="Rhea" id="RHEA:17773"/>
        <dbReference type="Rhea" id="RHEA-COMP:9661"/>
        <dbReference type="Rhea" id="RHEA-COMP:9679"/>
        <dbReference type="ChEBI" id="CHEBI:30616"/>
        <dbReference type="ChEBI" id="CHEBI:33019"/>
        <dbReference type="ChEBI" id="CHEBI:35235"/>
        <dbReference type="ChEBI" id="CHEBI:78442"/>
        <dbReference type="ChEBI" id="CHEBI:78517"/>
        <dbReference type="ChEBI" id="CHEBI:456215"/>
        <dbReference type="EC" id="6.1.1.16"/>
    </reaction>
</comment>
<comment type="cofactor">
    <cofactor evidence="1">
        <name>Zn(2+)</name>
        <dbReference type="ChEBI" id="CHEBI:29105"/>
    </cofactor>
    <text evidence="1">Binds 1 zinc ion per subunit.</text>
</comment>
<comment type="subcellular location">
    <subcellularLocation>
        <location evidence="1">Cytoplasm</location>
    </subcellularLocation>
</comment>
<comment type="similarity">
    <text evidence="1">Belongs to the class-I aminoacyl-tRNA synthetase family.</text>
</comment>
<accession>Q5JD45</accession>
<evidence type="ECO:0000255" key="1">
    <source>
        <dbReference type="HAMAP-Rule" id="MF_00041"/>
    </source>
</evidence>